<evidence type="ECO:0000250" key="1"/>
<evidence type="ECO:0000250" key="2">
    <source>
        <dbReference type="UniProtKB" id="P0DTO1"/>
    </source>
</evidence>
<evidence type="ECO:0000256" key="3">
    <source>
        <dbReference type="SAM" id="MobiDB-lite"/>
    </source>
</evidence>
<evidence type="ECO:0000305" key="4"/>
<organismHost>
    <name type="scientific">Homo sapiens</name>
    <name type="common">Human</name>
    <dbReference type="NCBI Taxonomy" id="9606"/>
</organismHost>
<reference key="1">
    <citation type="journal article" date="1999" name="J. Virol.">
        <title>Comparison of the complete DNA sequences of human herpesvirus 6 variants A and B.</title>
        <authorList>
            <person name="Isegawa Y."/>
            <person name="Mukai T."/>
            <person name="Nakano K."/>
            <person name="Kagawa M."/>
            <person name="Chen J."/>
            <person name="Mori Y."/>
            <person name="Sunagawa T."/>
            <person name="Kawanishi K."/>
            <person name="Sashihara J."/>
            <person name="Hata A."/>
            <person name="Zou P."/>
            <person name="Kosuge H."/>
            <person name="Yamanishi K."/>
        </authorList>
    </citation>
    <scope>NUCLEOTIDE SEQUENCE [LARGE SCALE GENOMIC DNA]</scope>
    <source>
        <strain>HST</strain>
    </source>
</reference>
<feature type="chain" id="PRO_0000461142" description="Large structural phosphoprotein">
    <location>
        <begin position="1"/>
        <end position="858"/>
    </location>
</feature>
<feature type="region of interest" description="Disordered" evidence="3">
    <location>
        <begin position="603"/>
        <end position="629"/>
    </location>
</feature>
<dbReference type="EMBL" id="AB021506">
    <property type="protein sequence ID" value="BAA78231.1"/>
    <property type="molecule type" value="Genomic_DNA"/>
</dbReference>
<dbReference type="PIR" id="T43970">
    <property type="entry name" value="T43970"/>
</dbReference>
<dbReference type="RefSeq" id="NP_050192.1">
    <property type="nucleotide sequence ID" value="NC_000898.1"/>
</dbReference>
<dbReference type="SMR" id="P0DTO2"/>
<dbReference type="GeneID" id="1497011"/>
<dbReference type="KEGG" id="vg:1497011"/>
<dbReference type="Proteomes" id="UP000142685">
    <property type="component" value="Segment"/>
</dbReference>
<dbReference type="GO" id="GO:0019033">
    <property type="term" value="C:viral tegument"/>
    <property type="evidence" value="ECO:0007669"/>
    <property type="project" value="UniProtKB-SubCell"/>
</dbReference>
<dbReference type="GO" id="GO:0005198">
    <property type="term" value="F:structural molecule activity"/>
    <property type="evidence" value="ECO:0007669"/>
    <property type="project" value="InterPro"/>
</dbReference>
<dbReference type="InterPro" id="IPR010340">
    <property type="entry name" value="Herpes_UL11/UL32"/>
</dbReference>
<dbReference type="Pfam" id="PF06070">
    <property type="entry name" value="Herpes_UL32"/>
    <property type="match status" value="2"/>
</dbReference>
<protein>
    <recommendedName>
        <fullName>Large structural phosphoprotein</fullName>
    </recommendedName>
    <alternativeName>
        <fullName>100 kDa phosphoprotein</fullName>
        <shortName>pp100</shortName>
    </alternativeName>
    <alternativeName>
        <fullName>Major antigenic structural protein</fullName>
    </alternativeName>
</protein>
<keyword id="KW-0597">Phosphoprotein</keyword>
<keyword id="KW-0946">Virion</keyword>
<keyword id="KW-0920">Virion tegument</keyword>
<sequence>MDLKAQSIPFAWLDRDKVQRLTNFLSNLENLENVDLREHPYVTNSCVVREGEDVDELKTLYNTFILWLMYHYVLSKRKPDYNAIWQDITKLQNVVNEYLKSKGLNKGNFENMFTNKEKFESQFSDIHRALLRLGNSIRWGSNVPIDTPYVNLTAEDSSEIENNLQDAEKNMLWYTVYNINDPWDENGYLVTSINKLVYLGKLFVTLNQSWSKLEKVAMSQIVTTQNHLSGHLRKNENFNAVYSQRVLQTPLTGQRVESFLKIITSDYEIIKSSLESYSASKAFSVPENGPHSLMDFASLDGRMPSDLSLPSISIDTKRPSADLARLKISQPKSLDAPLKTQRRHKFPESDSVDNAGGKILIKKETLGGRDVRATTPVSSVSLMSGVEPLSSLTSTNLDLRDKSHGNYRIGPSGILDFGVKLPAEAQSNTGDVDLLQDKTSIRSPSSGITDVVNGLANLNLRQNKSDVSRPWSKNTAANADVFDPVHRLVSEQTGTPFVLNNSDVAGSEAKLTTHSTETGVSPHNVSLIKDLRDKDGFRKQKKLDLLGSWTKEKNDKAIVHSREVTGDSGDATETVTARDSPVLRKTKHANDIFAGLNKKYARDVSRGGKGNSRDLYSGGNAEKKETSGKFNVDKEMTQNEQEPLPNLMEAARNAGEEQYVQAGLGQRVNKILAEFTNLISLGEKGIQDILHNQSGTELKLPTENKLGRESEEANVERILEVSDPQNLFKNFKLQNDLDSVQSPFRLPNADLSRDLDSVSFKDALDVKLPGNGEREIDLALQKVKAGERETSDFKVGQDETLIPTQLMKVETPEEKDDVIEKMVLRIRQDGETDEETVPGPGVAESLGIAAKDKSVIAS</sequence>
<comment type="subunit">
    <text evidence="2">Homotetramer (By similarity). Interacts with the major capsid protein (By similarity). 180 tegument protein pU11 tetramers bind to the virion capsid (By similarity).</text>
</comment>
<comment type="subcellular location">
    <subcellularLocation>
        <location evidence="2">Virion tegument</location>
    </subcellularLocation>
    <text evidence="1">Also found in dense bodies.</text>
</comment>
<comment type="PTM">
    <text evidence="1">Phosphorylated at multiple sites.</text>
</comment>
<comment type="similarity">
    <text evidence="4">Belongs to the herpesviridae large structural phosphoprotein family.</text>
</comment>
<proteinExistence type="inferred from homology"/>
<accession>P0DTO2</accession>
<accession>Q69535</accession>
<accession>Q785N5</accession>
<name>P100_HHV6H</name>
<organism>
    <name type="scientific">Human herpesvirus 6B</name>
    <name type="common">HHV-6 variant B</name>
    <name type="synonym">Human B lymphotropic virus</name>
    <dbReference type="NCBI Taxonomy" id="32604"/>
    <lineage>
        <taxon>Viruses</taxon>
        <taxon>Duplodnaviria</taxon>
        <taxon>Heunggongvirae</taxon>
        <taxon>Peploviricota</taxon>
        <taxon>Herviviricetes</taxon>
        <taxon>Herpesvirales</taxon>
        <taxon>Orthoherpesviridae</taxon>
        <taxon>Betaherpesvirinae</taxon>
        <taxon>Roseolovirus</taxon>
        <taxon>Roseolovirus humanbeta6b</taxon>
    </lineage>
</organism>
<gene>
    <name type="primary">U11</name>
</gene>